<accession>Q70XJ0</accession>
<protein>
    <recommendedName>
        <fullName>NADH-ubiquinone oxidoreductase chain 4L</fullName>
        <ecNumber>7.1.1.2</ecNumber>
    </recommendedName>
    <alternativeName>
        <fullName>NADH dehydrogenase subunit 4L</fullName>
    </alternativeName>
</protein>
<gene>
    <name type="primary">MT-ND4L</name>
    <name type="synonym">MTND4L</name>
    <name type="synonym">NADH4L</name>
    <name type="synonym">ND4L</name>
</gene>
<feature type="chain" id="PRO_0000275119" description="NADH-ubiquinone oxidoreductase chain 4L">
    <location>
        <begin position="1"/>
        <end position="98"/>
    </location>
</feature>
<feature type="transmembrane region" description="Helical" evidence="3">
    <location>
        <begin position="1"/>
        <end position="21"/>
    </location>
</feature>
<feature type="transmembrane region" description="Helical" evidence="3">
    <location>
        <begin position="26"/>
        <end position="46"/>
    </location>
</feature>
<feature type="transmembrane region" description="Helical" evidence="3">
    <location>
        <begin position="59"/>
        <end position="79"/>
    </location>
</feature>
<dbReference type="EC" id="7.1.1.2"/>
<dbReference type="EMBL" id="AJ508399">
    <property type="protein sequence ID" value="CAD48221.1"/>
    <property type="molecule type" value="Genomic_DNA"/>
</dbReference>
<dbReference type="RefSeq" id="YP_003721.1">
    <property type="nucleotide sequence ID" value="NC_005829.1"/>
</dbReference>
<dbReference type="SMR" id="Q70XJ0"/>
<dbReference type="GeneID" id="2769054"/>
<dbReference type="CTD" id="4539"/>
<dbReference type="GO" id="GO:0005743">
    <property type="term" value="C:mitochondrial inner membrane"/>
    <property type="evidence" value="ECO:0000250"/>
    <property type="project" value="UniProtKB"/>
</dbReference>
<dbReference type="GO" id="GO:0045271">
    <property type="term" value="C:respiratory chain complex I"/>
    <property type="evidence" value="ECO:0000250"/>
    <property type="project" value="UniProtKB"/>
</dbReference>
<dbReference type="GO" id="GO:0008137">
    <property type="term" value="F:NADH dehydrogenase (ubiquinone) activity"/>
    <property type="evidence" value="ECO:0000250"/>
    <property type="project" value="UniProtKB"/>
</dbReference>
<dbReference type="GO" id="GO:0042773">
    <property type="term" value="P:ATP synthesis coupled electron transport"/>
    <property type="evidence" value="ECO:0007669"/>
    <property type="project" value="InterPro"/>
</dbReference>
<dbReference type="FunFam" id="1.10.287.3510:FF:000002">
    <property type="entry name" value="NADH-ubiquinone oxidoreductase chain 4L"/>
    <property type="match status" value="1"/>
</dbReference>
<dbReference type="Gene3D" id="1.10.287.3510">
    <property type="match status" value="1"/>
</dbReference>
<dbReference type="InterPro" id="IPR001133">
    <property type="entry name" value="NADH_UbQ_OxRdtase_chain4L/K"/>
</dbReference>
<dbReference type="InterPro" id="IPR039428">
    <property type="entry name" value="NUOK/Mnh_C1-like"/>
</dbReference>
<dbReference type="PANTHER" id="PTHR11434:SF0">
    <property type="entry name" value="NADH-UBIQUINONE OXIDOREDUCTASE CHAIN 4L"/>
    <property type="match status" value="1"/>
</dbReference>
<dbReference type="PANTHER" id="PTHR11434">
    <property type="entry name" value="NADH-UBIQUINONE OXIDOREDUCTASE SUBUNIT ND4L"/>
    <property type="match status" value="1"/>
</dbReference>
<dbReference type="Pfam" id="PF00420">
    <property type="entry name" value="Oxidored_q2"/>
    <property type="match status" value="1"/>
</dbReference>
<comment type="function">
    <text evidence="1">Core subunit of the mitochondrial membrane respiratory chain NADH dehydrogenase (Complex I) which catalyzes electron transfer from NADH through the respiratory chain, using ubiquinone as an electron acceptor. Part of the enzyme membrane arm which is embedded in the lipid bilayer and involved in proton translocation.</text>
</comment>
<comment type="catalytic activity">
    <reaction evidence="1">
        <text>a ubiquinone + NADH + 5 H(+)(in) = a ubiquinol + NAD(+) + 4 H(+)(out)</text>
        <dbReference type="Rhea" id="RHEA:29091"/>
        <dbReference type="Rhea" id="RHEA-COMP:9565"/>
        <dbReference type="Rhea" id="RHEA-COMP:9566"/>
        <dbReference type="ChEBI" id="CHEBI:15378"/>
        <dbReference type="ChEBI" id="CHEBI:16389"/>
        <dbReference type="ChEBI" id="CHEBI:17976"/>
        <dbReference type="ChEBI" id="CHEBI:57540"/>
        <dbReference type="ChEBI" id="CHEBI:57945"/>
        <dbReference type="EC" id="7.1.1.2"/>
    </reaction>
    <physiologicalReaction direction="left-to-right" evidence="1">
        <dbReference type="Rhea" id="RHEA:29092"/>
    </physiologicalReaction>
</comment>
<comment type="subunit">
    <text evidence="2">Core subunit of respiratory chain NADH dehydrogenase (Complex I) which is composed of 45 different subunits.</text>
</comment>
<comment type="subcellular location">
    <subcellularLocation>
        <location evidence="2">Mitochondrion inner membrane</location>
        <topology evidence="3">Multi-pass membrane protein</topology>
    </subcellularLocation>
</comment>
<comment type="similarity">
    <text evidence="4">Belongs to the complex I subunit 4L family.</text>
</comment>
<reference key="1">
    <citation type="journal article" date="2004" name="Gene">
        <title>Marsupial relationships and a timeline for marsupial radiation in South Gondwana.</title>
        <authorList>
            <person name="Nilsson M.A."/>
            <person name="Arnason U."/>
            <person name="Spencer P.B.S."/>
            <person name="Janke A."/>
        </authorList>
    </citation>
    <scope>NUCLEOTIDE SEQUENCE [GENOMIC DNA]</scope>
</reference>
<sequence length="98" mass="10665">MTTIYLNLILAFTLALSGVLIYRSHLLSTLLCLEGMMLSLFILMALTISHFHMFSLSMAPLILLVFSACEAGVGLALLVKTSNAHGNDHVQSLNLLQC</sequence>
<name>NU4LM_RHYRA</name>
<geneLocation type="mitochondrion"/>
<organism>
    <name type="scientific">Rhyncholestes raphanurus</name>
    <name type="common">Chilean shrew opossum</name>
    <dbReference type="NCBI Taxonomy" id="33559"/>
    <lineage>
        <taxon>Eukaryota</taxon>
        <taxon>Metazoa</taxon>
        <taxon>Chordata</taxon>
        <taxon>Craniata</taxon>
        <taxon>Vertebrata</taxon>
        <taxon>Euteleostomi</taxon>
        <taxon>Mammalia</taxon>
        <taxon>Metatheria</taxon>
        <taxon>Paucituberculata</taxon>
        <taxon>Caenolestidae</taxon>
        <taxon>Rhyncholestes</taxon>
    </lineage>
</organism>
<evidence type="ECO:0000250" key="1">
    <source>
        <dbReference type="UniProtKB" id="P03901"/>
    </source>
</evidence>
<evidence type="ECO:0000250" key="2">
    <source>
        <dbReference type="UniProtKB" id="P03902"/>
    </source>
</evidence>
<evidence type="ECO:0000255" key="3"/>
<evidence type="ECO:0000305" key="4"/>
<keyword id="KW-0249">Electron transport</keyword>
<keyword id="KW-0472">Membrane</keyword>
<keyword id="KW-0496">Mitochondrion</keyword>
<keyword id="KW-0999">Mitochondrion inner membrane</keyword>
<keyword id="KW-0520">NAD</keyword>
<keyword id="KW-0679">Respiratory chain</keyword>
<keyword id="KW-1278">Translocase</keyword>
<keyword id="KW-0812">Transmembrane</keyword>
<keyword id="KW-1133">Transmembrane helix</keyword>
<keyword id="KW-0813">Transport</keyword>
<keyword id="KW-0830">Ubiquinone</keyword>
<proteinExistence type="inferred from homology"/>